<accession>B5FAK1</accession>
<reference key="1">
    <citation type="submission" date="2008-08" db="EMBL/GenBank/DDBJ databases">
        <title>Complete sequence of Vibrio fischeri strain MJ11.</title>
        <authorList>
            <person name="Mandel M.J."/>
            <person name="Stabb E.V."/>
            <person name="Ruby E.G."/>
            <person name="Ferriera S."/>
            <person name="Johnson J."/>
            <person name="Kravitz S."/>
            <person name="Beeson K."/>
            <person name="Sutton G."/>
            <person name="Rogers Y.-H."/>
            <person name="Friedman R."/>
            <person name="Frazier M."/>
            <person name="Venter J.C."/>
        </authorList>
    </citation>
    <scope>NUCLEOTIDE SEQUENCE [LARGE SCALE GENOMIC DNA]</scope>
    <source>
        <strain>MJ11</strain>
    </source>
</reference>
<evidence type="ECO:0000255" key="1">
    <source>
        <dbReference type="HAMAP-Rule" id="MF_00384"/>
    </source>
</evidence>
<proteinExistence type="inferred from homology"/>
<protein>
    <recommendedName>
        <fullName evidence="1">Homoserine kinase</fullName>
        <shortName evidence="1">HK</shortName>
        <shortName evidence="1">HSK</shortName>
        <ecNumber evidence="1">2.7.1.39</ecNumber>
    </recommendedName>
</protein>
<gene>
    <name evidence="1" type="primary">thrB</name>
    <name type="ordered locus">VFMJ11_2223</name>
</gene>
<keyword id="KW-0028">Amino-acid biosynthesis</keyword>
<keyword id="KW-0067">ATP-binding</keyword>
<keyword id="KW-0963">Cytoplasm</keyword>
<keyword id="KW-0418">Kinase</keyword>
<keyword id="KW-0547">Nucleotide-binding</keyword>
<keyword id="KW-0791">Threonine biosynthesis</keyword>
<keyword id="KW-0808">Transferase</keyword>
<name>KHSE_ALIFM</name>
<sequence length="318" mass="34520">MSVVVYAPASIGNVSVGFDVLGAAVSPIDGTLLGDRVLVELGSEAFTLATAGSFVDKLPENPKDNIVYDCWCVFSRELNKKNVALKNVHMILEKNMPIGSGLGSSACSIVAALDALNQFHDNPLNDVELLALMGEMEGQISGGIHYDNVAPCYLGGLQLMVEELGIISQEVPCFDEWYWVMAYPGIKVSTAEAREILPSQYRRQDVIAHGRNLAGFIHACYSKQPELAAKMIKDVVAEPYRERLLPNFAKAREYAASAGALTTGISGSGPTLFSICTDKDVADRVSRWLQENYVQNNEGFVHVCRLDKQGSQVTGSKL</sequence>
<organism>
    <name type="scientific">Aliivibrio fischeri (strain MJ11)</name>
    <name type="common">Vibrio fischeri</name>
    <dbReference type="NCBI Taxonomy" id="388396"/>
    <lineage>
        <taxon>Bacteria</taxon>
        <taxon>Pseudomonadati</taxon>
        <taxon>Pseudomonadota</taxon>
        <taxon>Gammaproteobacteria</taxon>
        <taxon>Vibrionales</taxon>
        <taxon>Vibrionaceae</taxon>
        <taxon>Aliivibrio</taxon>
    </lineage>
</organism>
<dbReference type="EC" id="2.7.1.39" evidence="1"/>
<dbReference type="EMBL" id="CP001139">
    <property type="protein sequence ID" value="ACH65660.1"/>
    <property type="molecule type" value="Genomic_DNA"/>
</dbReference>
<dbReference type="RefSeq" id="WP_012533201.1">
    <property type="nucleotide sequence ID" value="NC_011184.1"/>
</dbReference>
<dbReference type="SMR" id="B5FAK1"/>
<dbReference type="KEGG" id="vfm:VFMJ11_2223"/>
<dbReference type="HOGENOM" id="CLU_041243_1_1_6"/>
<dbReference type="UniPathway" id="UPA00050">
    <property type="reaction ID" value="UER00064"/>
</dbReference>
<dbReference type="Proteomes" id="UP000001857">
    <property type="component" value="Chromosome I"/>
</dbReference>
<dbReference type="GO" id="GO:0005737">
    <property type="term" value="C:cytoplasm"/>
    <property type="evidence" value="ECO:0007669"/>
    <property type="project" value="UniProtKB-SubCell"/>
</dbReference>
<dbReference type="GO" id="GO:0005524">
    <property type="term" value="F:ATP binding"/>
    <property type="evidence" value="ECO:0007669"/>
    <property type="project" value="UniProtKB-UniRule"/>
</dbReference>
<dbReference type="GO" id="GO:0004413">
    <property type="term" value="F:homoserine kinase activity"/>
    <property type="evidence" value="ECO:0007669"/>
    <property type="project" value="UniProtKB-UniRule"/>
</dbReference>
<dbReference type="GO" id="GO:0009088">
    <property type="term" value="P:threonine biosynthetic process"/>
    <property type="evidence" value="ECO:0007669"/>
    <property type="project" value="UniProtKB-UniRule"/>
</dbReference>
<dbReference type="Gene3D" id="3.30.230.10">
    <property type="match status" value="1"/>
</dbReference>
<dbReference type="Gene3D" id="3.30.70.890">
    <property type="entry name" value="GHMP kinase, C-terminal domain"/>
    <property type="match status" value="1"/>
</dbReference>
<dbReference type="HAMAP" id="MF_00384">
    <property type="entry name" value="Homoser_kinase"/>
    <property type="match status" value="1"/>
</dbReference>
<dbReference type="InterPro" id="IPR013750">
    <property type="entry name" value="GHMP_kinase_C_dom"/>
</dbReference>
<dbReference type="InterPro" id="IPR036554">
    <property type="entry name" value="GHMP_kinase_C_sf"/>
</dbReference>
<dbReference type="InterPro" id="IPR006204">
    <property type="entry name" value="GHMP_kinase_N_dom"/>
</dbReference>
<dbReference type="InterPro" id="IPR006203">
    <property type="entry name" value="GHMP_knse_ATP-bd_CS"/>
</dbReference>
<dbReference type="InterPro" id="IPR000870">
    <property type="entry name" value="Homoserine_kinase"/>
</dbReference>
<dbReference type="InterPro" id="IPR020568">
    <property type="entry name" value="Ribosomal_Su5_D2-typ_SF"/>
</dbReference>
<dbReference type="InterPro" id="IPR014721">
    <property type="entry name" value="Ribsml_uS5_D2-typ_fold_subgr"/>
</dbReference>
<dbReference type="NCBIfam" id="NF002288">
    <property type="entry name" value="PRK01212.1-4"/>
    <property type="match status" value="1"/>
</dbReference>
<dbReference type="NCBIfam" id="TIGR00191">
    <property type="entry name" value="thrB"/>
    <property type="match status" value="1"/>
</dbReference>
<dbReference type="PANTHER" id="PTHR20861:SF1">
    <property type="entry name" value="HOMOSERINE KINASE"/>
    <property type="match status" value="1"/>
</dbReference>
<dbReference type="PANTHER" id="PTHR20861">
    <property type="entry name" value="HOMOSERINE/4-DIPHOSPHOCYTIDYL-2-C-METHYL-D-ERYTHRITOL KINASE"/>
    <property type="match status" value="1"/>
</dbReference>
<dbReference type="Pfam" id="PF08544">
    <property type="entry name" value="GHMP_kinases_C"/>
    <property type="match status" value="1"/>
</dbReference>
<dbReference type="Pfam" id="PF00288">
    <property type="entry name" value="GHMP_kinases_N"/>
    <property type="match status" value="1"/>
</dbReference>
<dbReference type="PIRSF" id="PIRSF000676">
    <property type="entry name" value="Homoser_kin"/>
    <property type="match status" value="1"/>
</dbReference>
<dbReference type="PRINTS" id="PR00958">
    <property type="entry name" value="HOMSERKINASE"/>
</dbReference>
<dbReference type="SUPFAM" id="SSF55060">
    <property type="entry name" value="GHMP Kinase, C-terminal domain"/>
    <property type="match status" value="1"/>
</dbReference>
<dbReference type="SUPFAM" id="SSF54211">
    <property type="entry name" value="Ribosomal protein S5 domain 2-like"/>
    <property type="match status" value="1"/>
</dbReference>
<dbReference type="PROSITE" id="PS00627">
    <property type="entry name" value="GHMP_KINASES_ATP"/>
    <property type="match status" value="1"/>
</dbReference>
<comment type="function">
    <text evidence="1">Catalyzes the ATP-dependent phosphorylation of L-homoserine to L-homoserine phosphate.</text>
</comment>
<comment type="catalytic activity">
    <reaction evidence="1">
        <text>L-homoserine + ATP = O-phospho-L-homoserine + ADP + H(+)</text>
        <dbReference type="Rhea" id="RHEA:13985"/>
        <dbReference type="ChEBI" id="CHEBI:15378"/>
        <dbReference type="ChEBI" id="CHEBI:30616"/>
        <dbReference type="ChEBI" id="CHEBI:57476"/>
        <dbReference type="ChEBI" id="CHEBI:57590"/>
        <dbReference type="ChEBI" id="CHEBI:456216"/>
        <dbReference type="EC" id="2.7.1.39"/>
    </reaction>
</comment>
<comment type="pathway">
    <text evidence="1">Amino-acid biosynthesis; L-threonine biosynthesis; L-threonine from L-aspartate: step 4/5.</text>
</comment>
<comment type="subcellular location">
    <subcellularLocation>
        <location evidence="1">Cytoplasm</location>
    </subcellularLocation>
</comment>
<comment type="similarity">
    <text evidence="1">Belongs to the GHMP kinase family. Homoserine kinase subfamily.</text>
</comment>
<feature type="chain" id="PRO_1000122449" description="Homoserine kinase">
    <location>
        <begin position="1"/>
        <end position="318"/>
    </location>
</feature>
<feature type="binding site" evidence="1">
    <location>
        <begin position="97"/>
        <end position="107"/>
    </location>
    <ligand>
        <name>ATP</name>
        <dbReference type="ChEBI" id="CHEBI:30616"/>
    </ligand>
</feature>